<dbReference type="EC" id="1.14.18.2"/>
<dbReference type="EMBL" id="AJ242835">
    <property type="protein sequence ID" value="CAB44648.1"/>
    <property type="molecule type" value="mRNA"/>
</dbReference>
<dbReference type="PaxDb" id="10029-XP_007634620.1"/>
<dbReference type="eggNOG" id="ENOG502QR0M">
    <property type="taxonomic scope" value="Eukaryota"/>
</dbReference>
<dbReference type="UniPathway" id="UPA00628"/>
<dbReference type="Proteomes" id="UP000694386">
    <property type="component" value="Unplaced"/>
</dbReference>
<dbReference type="Proteomes" id="UP001108280">
    <property type="component" value="Unplaced"/>
</dbReference>
<dbReference type="GO" id="GO:0005737">
    <property type="term" value="C:cytoplasm"/>
    <property type="evidence" value="ECO:0007669"/>
    <property type="project" value="UniProtKB-SubCell"/>
</dbReference>
<dbReference type="GO" id="GO:0051537">
    <property type="term" value="F:2 iron, 2 sulfur cluster binding"/>
    <property type="evidence" value="ECO:0007669"/>
    <property type="project" value="UniProtKB-KW"/>
</dbReference>
<dbReference type="GO" id="GO:0030338">
    <property type="term" value="F:CMP-N-acetylneuraminate monooxygenase activity"/>
    <property type="evidence" value="ECO:0007669"/>
    <property type="project" value="UniProtKB-EC"/>
</dbReference>
<dbReference type="GO" id="GO:0046872">
    <property type="term" value="F:metal ion binding"/>
    <property type="evidence" value="ECO:0007669"/>
    <property type="project" value="UniProtKB-KW"/>
</dbReference>
<dbReference type="GO" id="GO:0046381">
    <property type="term" value="P:CMP-N-acetylneuraminate metabolic process"/>
    <property type="evidence" value="ECO:0007669"/>
    <property type="project" value="TreeGrafter"/>
</dbReference>
<dbReference type="GO" id="GO:0006054">
    <property type="term" value="P:N-acetylneuraminate metabolic process"/>
    <property type="evidence" value="ECO:0007669"/>
    <property type="project" value="UniProtKB-UniPathway"/>
</dbReference>
<dbReference type="CDD" id="cd03473">
    <property type="entry name" value="Rieske_CMP_Neu5Ac_hydrolase_N"/>
    <property type="match status" value="1"/>
</dbReference>
<dbReference type="FunFam" id="3.60.15.10:FF:000025">
    <property type="entry name" value="Inactive cytidine monophosphate-N-acetylneuraminic acid hydroxylase"/>
    <property type="match status" value="1"/>
</dbReference>
<dbReference type="Gene3D" id="3.60.15.10">
    <property type="entry name" value="Ribonuclease Z/Hydroxyacylglutathione hydrolase-like"/>
    <property type="match status" value="1"/>
</dbReference>
<dbReference type="Gene3D" id="2.102.10.10">
    <property type="entry name" value="Rieske [2Fe-2S] iron-sulphur domain"/>
    <property type="match status" value="1"/>
</dbReference>
<dbReference type="InterPro" id="IPR037339">
    <property type="entry name" value="CMP-Neu5Ac_hydroxylase_Rieske"/>
</dbReference>
<dbReference type="InterPro" id="IPR027033">
    <property type="entry name" value="Cnh"/>
</dbReference>
<dbReference type="InterPro" id="IPR036866">
    <property type="entry name" value="RibonucZ/Hydroxyglut_hydro"/>
</dbReference>
<dbReference type="InterPro" id="IPR017941">
    <property type="entry name" value="Rieske_2Fe-2S"/>
</dbReference>
<dbReference type="InterPro" id="IPR036922">
    <property type="entry name" value="Rieske_2Fe-2S_sf"/>
</dbReference>
<dbReference type="PANTHER" id="PTHR46522">
    <property type="entry name" value="CYTIDINE MONOPHOSPHATE-N-ACETYLNEURAMINIC ACID HYDROXYLASE"/>
    <property type="match status" value="1"/>
</dbReference>
<dbReference type="PANTHER" id="PTHR46522:SF1">
    <property type="entry name" value="INACTIVE CYTIDINE MONOPHOSPHATE-N-ACETYLNEURAMINIC ACID HYDROXYLASE"/>
    <property type="match status" value="1"/>
</dbReference>
<dbReference type="Pfam" id="PF13483">
    <property type="entry name" value="Lactamase_B_3"/>
    <property type="match status" value="1"/>
</dbReference>
<dbReference type="Pfam" id="PF00355">
    <property type="entry name" value="Rieske"/>
    <property type="match status" value="1"/>
</dbReference>
<dbReference type="SUPFAM" id="SSF50022">
    <property type="entry name" value="ISP domain"/>
    <property type="match status" value="1"/>
</dbReference>
<dbReference type="SUPFAM" id="SSF56281">
    <property type="entry name" value="Metallo-hydrolase/oxidoreductase"/>
    <property type="match status" value="1"/>
</dbReference>
<dbReference type="PROSITE" id="PS51296">
    <property type="entry name" value="RIESKE"/>
    <property type="match status" value="1"/>
</dbReference>
<accession>Q9WV23</accession>
<feature type="chain" id="PRO_0000127799" description="Cytidine monophosphate-N-acetylneuraminic acid hydroxylase">
    <location>
        <begin position="1" status="less than"/>
        <end position="563" status="greater than"/>
    </location>
</feature>
<feature type="domain" description="Rieske" evidence="2">
    <location>
        <begin position="10"/>
        <end position="108"/>
    </location>
</feature>
<feature type="binding site" evidence="2">
    <location>
        <position position="50"/>
    </location>
    <ligand>
        <name>[2Fe-2S] cluster</name>
        <dbReference type="ChEBI" id="CHEBI:190135"/>
    </ligand>
</feature>
<feature type="binding site" evidence="2">
    <location>
        <position position="52"/>
    </location>
    <ligand>
        <name>[2Fe-2S] cluster</name>
        <dbReference type="ChEBI" id="CHEBI:190135"/>
    </ligand>
</feature>
<feature type="binding site" evidence="2">
    <location>
        <position position="71"/>
    </location>
    <ligand>
        <name>[2Fe-2S] cluster</name>
        <dbReference type="ChEBI" id="CHEBI:190135"/>
    </ligand>
</feature>
<feature type="binding site" evidence="2">
    <location>
        <position position="74"/>
    </location>
    <ligand>
        <name>[2Fe-2S] cluster</name>
        <dbReference type="ChEBI" id="CHEBI:190135"/>
    </ligand>
</feature>
<feature type="non-terminal residue">
    <location>
        <position position="1"/>
    </location>
</feature>
<feature type="non-terminal residue">
    <location>
        <position position="563"/>
    </location>
</feature>
<evidence type="ECO:0000250" key="1"/>
<evidence type="ECO:0000255" key="2">
    <source>
        <dbReference type="PROSITE-ProRule" id="PRU00628"/>
    </source>
</evidence>
<evidence type="ECO:0000269" key="3">
    <source>
    </source>
</evidence>
<evidence type="ECO:0000305" key="4"/>
<name>CMAH_CRIGR</name>
<gene>
    <name type="primary">CMAH</name>
    <name type="synonym">CNAH</name>
</gene>
<sequence length="563" mass="65105">KQTAETLLSLSPAETANLKEGINFFRNKTTGKEYILYKEKNHLKACKNLCKHQGGLFIKDIEDLDGRSVKCTKHNWKLDVSTMKYINPPGSFCQDELVVEMDGNDGLFLIELNPPNPWDSDPRTPEELAFGEVQITYLTHACMDLKLGDKRMVFDPWLIGPAFARGWWLLHEPPSDWLERLCKADLIYISHMHSDHLSYPTLKQLSQRRPDIPIYVGDTERPVFWNLDQSGVQLTNINVVPFGVWQQVDKNLRFMILMDGVHPEMDTCIIVEYKGHKILNTVDCTRPNGGRLPEKAALMMSDFAGGASGFPMTFSGGKFTEEWKAQFIKAERRKLLNYKAQLVKDLQPRIYCPFAGYFVESHPSDKYIKETNIKNDPIQLNNLIKKNCDVVTWTPRPGATLDLGRMLKDPTDSQGIIEPPEGTKIYKDSWDFGPYLSTLHSAVGDEIFLHSSWIKEYFTWAGFKSYNLVVRMIETDEDFNPFPGGYDYLVDFLDLSFPKERPSREHPYEEIRSRVDVVRYVVKHGLLWDDLYIGFQTRLQRDPDIYHHLFWNHFQIKLPLTPP</sequence>
<organism>
    <name type="scientific">Cricetulus griseus</name>
    <name type="common">Chinese hamster</name>
    <name type="synonym">Cricetulus barabensis griseus</name>
    <dbReference type="NCBI Taxonomy" id="10029"/>
    <lineage>
        <taxon>Eukaryota</taxon>
        <taxon>Metazoa</taxon>
        <taxon>Chordata</taxon>
        <taxon>Craniata</taxon>
        <taxon>Vertebrata</taxon>
        <taxon>Euteleostomi</taxon>
        <taxon>Mammalia</taxon>
        <taxon>Eutheria</taxon>
        <taxon>Euarchontoglires</taxon>
        <taxon>Glires</taxon>
        <taxon>Rodentia</taxon>
        <taxon>Myomorpha</taxon>
        <taxon>Muroidea</taxon>
        <taxon>Cricetidae</taxon>
        <taxon>Cricetinae</taxon>
        <taxon>Cricetulus</taxon>
    </lineage>
</organism>
<reference key="1">
    <citation type="journal article" date="2003" name="Biochim. Biophys. Acta">
        <title>Reduction of CMP-N-acetylneuraminic acid hydroxylase activity in engineered Chinese hamster ovary cells using an antisense-RNA strategy.</title>
        <authorList>
            <person name="Chenu S."/>
            <person name="Gregoire A."/>
            <person name="Malykh Y."/>
            <person name="Visvikis A."/>
            <person name="Monaco L."/>
            <person name="Shaw L."/>
            <person name="Schauer R."/>
            <person name="Marc A."/>
            <person name="Goergen J.-L."/>
        </authorList>
    </citation>
    <scope>NUCLEOTIDE SEQUENCE [MRNA]</scope>
    <scope>FUNCTION</scope>
    <scope>ENZYME ACTIVITY</scope>
</reference>
<comment type="function">
    <text evidence="3">Sialic acids are components of carbohydrate chains of glycoconjugates and are involved in cell-cell recognition and cell-pathogen interactions. Catalyzes the conversion of CMP-N-acetylneuraminic acid (CMP-Neu5Ac) into its hydroxylated derivative CMP-N-glycolylneuraminic acid (CMP-Neu5Gc), a sialic acid abundantly expressed at the surface of many cells.</text>
</comment>
<comment type="catalytic activity">
    <reaction evidence="3">
        <text>CMP-N-acetyl-beta-neuraminate + 2 Fe(II)-[cytochrome b5] + O2 + 2 H(+) = CMP-N-glycoloyl-beta-neuraminate + 2 Fe(III)-[cytochrome b5] + H2O</text>
        <dbReference type="Rhea" id="RHEA:16145"/>
        <dbReference type="Rhea" id="RHEA-COMP:10438"/>
        <dbReference type="Rhea" id="RHEA-COMP:10439"/>
        <dbReference type="ChEBI" id="CHEBI:15377"/>
        <dbReference type="ChEBI" id="CHEBI:15378"/>
        <dbReference type="ChEBI" id="CHEBI:15379"/>
        <dbReference type="ChEBI" id="CHEBI:29033"/>
        <dbReference type="ChEBI" id="CHEBI:29034"/>
        <dbReference type="ChEBI" id="CHEBI:57812"/>
        <dbReference type="ChEBI" id="CHEBI:58376"/>
        <dbReference type="EC" id="1.14.18.2"/>
    </reaction>
</comment>
<comment type="cofactor">
    <cofactor evidence="2">
        <name>[2Fe-2S] cluster</name>
        <dbReference type="ChEBI" id="CHEBI:190135"/>
    </cofactor>
    <text evidence="2">Binds 1 [2Fe-2S] cluster per subunit.</text>
</comment>
<comment type="pathway">
    <text>Amino-sugar metabolism; N-acetylneuraminate metabolism.</text>
</comment>
<comment type="subcellular location">
    <subcellularLocation>
        <location evidence="1">Cytoplasm</location>
    </subcellularLocation>
</comment>
<comment type="similarity">
    <text evidence="4">Belongs to the CMP-Neu5Ac hydroxylase family.</text>
</comment>
<protein>
    <recommendedName>
        <fullName>Cytidine monophosphate-N-acetylneuraminic acid hydroxylase</fullName>
        <shortName>CMP-N-acetylneuraminic acid hydroxylase</shortName>
        <ecNumber>1.14.18.2</ecNumber>
    </recommendedName>
    <alternativeName>
        <fullName>CMP-N-acetylneuraminate monooxygenase</fullName>
    </alternativeName>
    <alternativeName>
        <fullName>CMP-Neu5Ac hydroxylase</fullName>
    </alternativeName>
    <alternativeName>
        <fullName>CMP-NeuAc hydroxylase</fullName>
    </alternativeName>
</protein>
<keyword id="KW-0001">2Fe-2S</keyword>
<keyword id="KW-0963">Cytoplasm</keyword>
<keyword id="KW-0249">Electron transport</keyword>
<keyword id="KW-0408">Iron</keyword>
<keyword id="KW-0411">Iron-sulfur</keyword>
<keyword id="KW-0479">Metal-binding</keyword>
<keyword id="KW-0560">Oxidoreductase</keyword>
<keyword id="KW-0813">Transport</keyword>
<proteinExistence type="evidence at transcript level"/>